<reference key="1">
    <citation type="submission" date="1996-07" db="EMBL/GenBank/DDBJ databases">
        <title>Characterization of the kapD gene and encoded protein which specifically inhibits the KinA pathway to sporulation in Bacillus subtilis.</title>
        <authorList>
            <person name="Dartois V.A."/>
            <person name="Grau R."/>
            <person name="Liu J."/>
            <person name="Hoch J.A."/>
        </authorList>
    </citation>
    <scope>NUCLEOTIDE SEQUENCE [GENOMIC DNA]</scope>
    <scope>FUNCTION</scope>
    <source>
        <strain>168</strain>
    </source>
</reference>
<reference key="2">
    <citation type="journal article" date="1997" name="Microbiology">
        <title>Analysis of the Bacillus subtilis genome: cloning and nucleotide sequence of a 62 kb region between 275 degrees (rrnB) and 284 degrees (pai).</title>
        <authorList>
            <person name="Oudega B."/>
            <person name="Koningstein G."/>
            <person name="Rodrigues L."/>
            <person name="de Sales Ramon M."/>
            <person name="Hilbert H."/>
            <person name="Duesterhoeft A."/>
            <person name="Pohl T.M."/>
            <person name="Weitzenegger T."/>
        </authorList>
    </citation>
    <scope>NUCLEOTIDE SEQUENCE [GENOMIC DNA]</scope>
    <source>
        <strain>168</strain>
    </source>
</reference>
<reference key="3">
    <citation type="journal article" date="1997" name="Nature">
        <title>The complete genome sequence of the Gram-positive bacterium Bacillus subtilis.</title>
        <authorList>
            <person name="Kunst F."/>
            <person name="Ogasawara N."/>
            <person name="Moszer I."/>
            <person name="Albertini A.M."/>
            <person name="Alloni G."/>
            <person name="Azevedo V."/>
            <person name="Bertero M.G."/>
            <person name="Bessieres P."/>
            <person name="Bolotin A."/>
            <person name="Borchert S."/>
            <person name="Borriss R."/>
            <person name="Boursier L."/>
            <person name="Brans A."/>
            <person name="Braun M."/>
            <person name="Brignell S.C."/>
            <person name="Bron S."/>
            <person name="Brouillet S."/>
            <person name="Bruschi C.V."/>
            <person name="Caldwell B."/>
            <person name="Capuano V."/>
            <person name="Carter N.M."/>
            <person name="Choi S.-K."/>
            <person name="Codani J.-J."/>
            <person name="Connerton I.F."/>
            <person name="Cummings N.J."/>
            <person name="Daniel R.A."/>
            <person name="Denizot F."/>
            <person name="Devine K.M."/>
            <person name="Duesterhoeft A."/>
            <person name="Ehrlich S.D."/>
            <person name="Emmerson P.T."/>
            <person name="Entian K.-D."/>
            <person name="Errington J."/>
            <person name="Fabret C."/>
            <person name="Ferrari E."/>
            <person name="Foulger D."/>
            <person name="Fritz C."/>
            <person name="Fujita M."/>
            <person name="Fujita Y."/>
            <person name="Fuma S."/>
            <person name="Galizzi A."/>
            <person name="Galleron N."/>
            <person name="Ghim S.-Y."/>
            <person name="Glaser P."/>
            <person name="Goffeau A."/>
            <person name="Golightly E.J."/>
            <person name="Grandi G."/>
            <person name="Guiseppi G."/>
            <person name="Guy B.J."/>
            <person name="Haga K."/>
            <person name="Haiech J."/>
            <person name="Harwood C.R."/>
            <person name="Henaut A."/>
            <person name="Hilbert H."/>
            <person name="Holsappel S."/>
            <person name="Hosono S."/>
            <person name="Hullo M.-F."/>
            <person name="Itaya M."/>
            <person name="Jones L.-M."/>
            <person name="Joris B."/>
            <person name="Karamata D."/>
            <person name="Kasahara Y."/>
            <person name="Klaerr-Blanchard M."/>
            <person name="Klein C."/>
            <person name="Kobayashi Y."/>
            <person name="Koetter P."/>
            <person name="Koningstein G."/>
            <person name="Krogh S."/>
            <person name="Kumano M."/>
            <person name="Kurita K."/>
            <person name="Lapidus A."/>
            <person name="Lardinois S."/>
            <person name="Lauber J."/>
            <person name="Lazarevic V."/>
            <person name="Lee S.-M."/>
            <person name="Levine A."/>
            <person name="Liu H."/>
            <person name="Masuda S."/>
            <person name="Mauel C."/>
            <person name="Medigue C."/>
            <person name="Medina N."/>
            <person name="Mellado R.P."/>
            <person name="Mizuno M."/>
            <person name="Moestl D."/>
            <person name="Nakai S."/>
            <person name="Noback M."/>
            <person name="Noone D."/>
            <person name="O'Reilly M."/>
            <person name="Ogawa K."/>
            <person name="Ogiwara A."/>
            <person name="Oudega B."/>
            <person name="Park S.-H."/>
            <person name="Parro V."/>
            <person name="Pohl T.M."/>
            <person name="Portetelle D."/>
            <person name="Porwollik S."/>
            <person name="Prescott A.M."/>
            <person name="Presecan E."/>
            <person name="Pujic P."/>
            <person name="Purnelle B."/>
            <person name="Rapoport G."/>
            <person name="Rey M."/>
            <person name="Reynolds S."/>
            <person name="Rieger M."/>
            <person name="Rivolta C."/>
            <person name="Rocha E."/>
            <person name="Roche B."/>
            <person name="Rose M."/>
            <person name="Sadaie Y."/>
            <person name="Sato T."/>
            <person name="Scanlan E."/>
            <person name="Schleich S."/>
            <person name="Schroeter R."/>
            <person name="Scoffone F."/>
            <person name="Sekiguchi J."/>
            <person name="Sekowska A."/>
            <person name="Seror S.J."/>
            <person name="Serror P."/>
            <person name="Shin B.-S."/>
            <person name="Soldo B."/>
            <person name="Sorokin A."/>
            <person name="Tacconi E."/>
            <person name="Takagi T."/>
            <person name="Takahashi H."/>
            <person name="Takemaru K."/>
            <person name="Takeuchi M."/>
            <person name="Tamakoshi A."/>
            <person name="Tanaka T."/>
            <person name="Terpstra P."/>
            <person name="Tognoni A."/>
            <person name="Tosato V."/>
            <person name="Uchiyama S."/>
            <person name="Vandenbol M."/>
            <person name="Vannier F."/>
            <person name="Vassarotti A."/>
            <person name="Viari A."/>
            <person name="Wambutt R."/>
            <person name="Wedler E."/>
            <person name="Wedler H."/>
            <person name="Weitzenegger T."/>
            <person name="Winters P."/>
            <person name="Wipat A."/>
            <person name="Yamamoto H."/>
            <person name="Yamane K."/>
            <person name="Yasumoto K."/>
            <person name="Yata K."/>
            <person name="Yoshida K."/>
            <person name="Yoshikawa H.-F."/>
            <person name="Zumstein E."/>
            <person name="Yoshikawa H."/>
            <person name="Danchin A."/>
        </authorList>
    </citation>
    <scope>NUCLEOTIDE SEQUENCE [LARGE SCALE GENOMIC DNA]</scope>
    <source>
        <strain>168</strain>
    </source>
</reference>
<evidence type="ECO:0000250" key="1"/>
<evidence type="ECO:0000255" key="2"/>
<evidence type="ECO:0000269" key="3">
    <source ref="1"/>
</evidence>
<evidence type="ECO:0000305" key="4"/>
<gene>
    <name type="primary">kapD</name>
    <name type="synonym">yugB</name>
    <name type="ordered locus">BSU31470</name>
</gene>
<feature type="chain" id="PRO_0000360763" description="Probable 3'-5' exonuclease KapD">
    <location>
        <begin position="1"/>
        <end position="205"/>
    </location>
</feature>
<feature type="domain" description="Exonuclease">
    <location>
        <begin position="6"/>
        <end position="173"/>
    </location>
</feature>
<feature type="active site" description="Proton acceptor" evidence="2">
    <location>
        <position position="12"/>
    </location>
</feature>
<feature type="active site" description="Proton acceptor" evidence="2">
    <location>
        <position position="160"/>
    </location>
</feature>
<feature type="binding site" evidence="1">
    <location>
        <position position="10"/>
    </location>
    <ligand>
        <name>Mg(2+)</name>
        <dbReference type="ChEBI" id="CHEBI:18420"/>
        <label>1</label>
    </ligand>
</feature>
<feature type="binding site" evidence="1">
    <location>
        <position position="10"/>
    </location>
    <ligand>
        <name>Mg(2+)</name>
        <dbReference type="ChEBI" id="CHEBI:18420"/>
        <label>2</label>
    </ligand>
</feature>
<feature type="binding site" evidence="1">
    <location>
        <position position="12"/>
    </location>
    <ligand>
        <name>AMP</name>
        <dbReference type="ChEBI" id="CHEBI:456215"/>
    </ligand>
</feature>
<feature type="binding site" evidence="1">
    <location>
        <position position="12"/>
    </location>
    <ligand>
        <name>Mg(2+)</name>
        <dbReference type="ChEBI" id="CHEBI:18420"/>
        <label>1</label>
    </ligand>
</feature>
<feature type="binding site" evidence="1">
    <location>
        <position position="104"/>
    </location>
    <ligand>
        <name>Mg(2+)</name>
        <dbReference type="ChEBI" id="CHEBI:18420"/>
        <label>2</label>
    </ligand>
</feature>
<feature type="binding site" evidence="1">
    <location>
        <position position="160"/>
    </location>
    <ligand>
        <name>AMP</name>
        <dbReference type="ChEBI" id="CHEBI:456215"/>
    </ligand>
</feature>
<feature type="binding site" evidence="1">
    <location>
        <position position="165"/>
    </location>
    <ligand>
        <name>Mg(2+)</name>
        <dbReference type="ChEBI" id="CHEBI:18420"/>
        <label>1</label>
    </ligand>
</feature>
<feature type="sequence conflict" description="In Ref. 1; AAB61982." evidence="4" ref="1">
    <original>L</original>
    <variation>H</variation>
    <location>
        <position position="163"/>
    </location>
</feature>
<name>KAPD_BACSU</name>
<protein>
    <recommendedName>
        <fullName>Probable 3'-5' exonuclease KapD</fullName>
        <ecNumber>3.1.-.-</ecNumber>
    </recommendedName>
</protein>
<dbReference type="EC" id="3.1.-.-"/>
<dbReference type="EMBL" id="U63302">
    <property type="protein sequence ID" value="AAB61982.1"/>
    <property type="molecule type" value="Genomic_DNA"/>
</dbReference>
<dbReference type="EMBL" id="Z93933">
    <property type="protein sequence ID" value="CAB07913.1"/>
    <property type="molecule type" value="Genomic_DNA"/>
</dbReference>
<dbReference type="EMBL" id="AL009126">
    <property type="protein sequence ID" value="CAB15136.1"/>
    <property type="molecule type" value="Genomic_DNA"/>
</dbReference>
<dbReference type="PIR" id="B69647">
    <property type="entry name" value="B69647"/>
</dbReference>
<dbReference type="RefSeq" id="NP_391025.1">
    <property type="nucleotide sequence ID" value="NC_000964.3"/>
</dbReference>
<dbReference type="RefSeq" id="WP_003228846.1">
    <property type="nucleotide sequence ID" value="NZ_OZ025638.1"/>
</dbReference>
<dbReference type="SMR" id="O05231"/>
<dbReference type="FunCoup" id="O05231">
    <property type="interactions" value="123"/>
</dbReference>
<dbReference type="STRING" id="224308.BSU31470"/>
<dbReference type="PaxDb" id="224308-BSU31470"/>
<dbReference type="EnsemblBacteria" id="CAB15136">
    <property type="protein sequence ID" value="CAB15136"/>
    <property type="gene ID" value="BSU_31470"/>
</dbReference>
<dbReference type="GeneID" id="937171"/>
<dbReference type="KEGG" id="bsu:BSU31470"/>
<dbReference type="PATRIC" id="fig|224308.179.peg.3411"/>
<dbReference type="eggNOG" id="COG5018">
    <property type="taxonomic scope" value="Bacteria"/>
</dbReference>
<dbReference type="InParanoid" id="O05231"/>
<dbReference type="OrthoDB" id="159416at2"/>
<dbReference type="PhylomeDB" id="O05231"/>
<dbReference type="BioCyc" id="BSUB:BSU31470-MONOMER"/>
<dbReference type="Proteomes" id="UP000001570">
    <property type="component" value="Chromosome"/>
</dbReference>
<dbReference type="GO" id="GO:0000175">
    <property type="term" value="F:3'-5'-RNA exonuclease activity"/>
    <property type="evidence" value="ECO:0007669"/>
    <property type="project" value="InterPro"/>
</dbReference>
<dbReference type="GO" id="GO:0046872">
    <property type="term" value="F:metal ion binding"/>
    <property type="evidence" value="ECO:0007669"/>
    <property type="project" value="UniProtKB-KW"/>
</dbReference>
<dbReference type="GO" id="GO:0003676">
    <property type="term" value="F:nucleic acid binding"/>
    <property type="evidence" value="ECO:0007669"/>
    <property type="project" value="InterPro"/>
</dbReference>
<dbReference type="GO" id="GO:0030435">
    <property type="term" value="P:sporulation resulting in formation of a cellular spore"/>
    <property type="evidence" value="ECO:0007669"/>
    <property type="project" value="UniProtKB-KW"/>
</dbReference>
<dbReference type="CDD" id="cd06133">
    <property type="entry name" value="ERI-1_3'hExo_like"/>
    <property type="match status" value="1"/>
</dbReference>
<dbReference type="Gene3D" id="3.30.420.10">
    <property type="entry name" value="Ribonuclease H-like superfamily/Ribonuclease H"/>
    <property type="match status" value="1"/>
</dbReference>
<dbReference type="InterPro" id="IPR051274">
    <property type="entry name" value="3-5_Exoribonuclease"/>
</dbReference>
<dbReference type="InterPro" id="IPR047201">
    <property type="entry name" value="ERI-1_3'hExo-like"/>
</dbReference>
<dbReference type="InterPro" id="IPR013520">
    <property type="entry name" value="Exonuclease_RNaseT/DNA_pol3"/>
</dbReference>
<dbReference type="InterPro" id="IPR012337">
    <property type="entry name" value="RNaseH-like_sf"/>
</dbReference>
<dbReference type="InterPro" id="IPR036397">
    <property type="entry name" value="RNaseH_sf"/>
</dbReference>
<dbReference type="NCBIfam" id="NF005838">
    <property type="entry name" value="PRK07748.1"/>
    <property type="match status" value="1"/>
</dbReference>
<dbReference type="PANTHER" id="PTHR23044">
    <property type="entry name" value="3'-5' EXONUCLEASE ERI1-RELATED"/>
    <property type="match status" value="1"/>
</dbReference>
<dbReference type="PANTHER" id="PTHR23044:SF61">
    <property type="entry name" value="3'-5' EXORIBONUCLEASE 1-RELATED"/>
    <property type="match status" value="1"/>
</dbReference>
<dbReference type="Pfam" id="PF00929">
    <property type="entry name" value="RNase_T"/>
    <property type="match status" value="1"/>
</dbReference>
<dbReference type="SMART" id="SM00479">
    <property type="entry name" value="EXOIII"/>
    <property type="match status" value="1"/>
</dbReference>
<dbReference type="SUPFAM" id="SSF53098">
    <property type="entry name" value="Ribonuclease H-like"/>
    <property type="match status" value="1"/>
</dbReference>
<organism>
    <name type="scientific">Bacillus subtilis (strain 168)</name>
    <dbReference type="NCBI Taxonomy" id="224308"/>
    <lineage>
        <taxon>Bacteria</taxon>
        <taxon>Bacillati</taxon>
        <taxon>Bacillota</taxon>
        <taxon>Bacilli</taxon>
        <taxon>Bacillales</taxon>
        <taxon>Bacillaceae</taxon>
        <taxon>Bacillus</taxon>
    </lineage>
</organism>
<comment type="function">
    <text evidence="3">Specifically inhibits the KinA pathway to sporulation.</text>
</comment>
<comment type="cofactor">
    <cofactor evidence="1">
        <name>Mg(2+)</name>
        <dbReference type="ChEBI" id="CHEBI:18420"/>
    </cofactor>
    <text evidence="1">Binds 2 magnesium ions per subunit.</text>
</comment>
<sequence>MTTNSLLIIDFEFTMPDGKYSPQNFFPEIIEAGIVKSIDDEVVETFSSYVRPKKFPKLTKRCKSFLKITQKQVDEGMRFEDFIRKLNELDPEKNSTIITWGNMDMKVLKQNCMFNHIPFPFKGEMRDLSLEYKNFFGDRTLTGLWKAAEEYGDSGTGTHHKALDDALTAYKLFKLVEQDKQYLEKPKPPTIGERIDLTELLKRAT</sequence>
<keyword id="KW-0269">Exonuclease</keyword>
<keyword id="KW-0378">Hydrolase</keyword>
<keyword id="KW-0460">Magnesium</keyword>
<keyword id="KW-0479">Metal-binding</keyword>
<keyword id="KW-0540">Nuclease</keyword>
<keyword id="KW-1185">Reference proteome</keyword>
<keyword id="KW-0749">Sporulation</keyword>
<accession>O05231</accession>
<accession>O24685</accession>
<accession>Q795M4</accession>
<proteinExistence type="inferred from homology"/>